<protein>
    <recommendedName>
        <fullName>Calcineurin subunit B</fullName>
    </recommendedName>
    <alternativeName>
        <fullName>Calcineurin regulatory subunit</fullName>
    </alternativeName>
    <alternativeName>
        <fullName>Protein phosphatase 2B regulatory subunit</fullName>
    </alternativeName>
</protein>
<sequence length="174" mass="19542">MGVASSKILENLMEGTNFDKEEIERLRKRFMKLDKDGSGTIDKNEFLTIPGISSNPLAARLMDVFDEDGNGTIDFQEFIMGLSAFSGKTSKLDKLKFAFKIYDIDRDGYIGNGELFIVMKMMVGKNLQDEELQQIVDKTMMEADEDGDGRLNFHEFKNAVDSKSVASALTLNMI</sequence>
<reference key="1">
    <citation type="journal article" date="2004" name="Nature">
        <title>Genome evolution in yeasts.</title>
        <authorList>
            <person name="Dujon B."/>
            <person name="Sherman D."/>
            <person name="Fischer G."/>
            <person name="Durrens P."/>
            <person name="Casaregola S."/>
            <person name="Lafontaine I."/>
            <person name="de Montigny J."/>
            <person name="Marck C."/>
            <person name="Neuveglise C."/>
            <person name="Talla E."/>
            <person name="Goffard N."/>
            <person name="Frangeul L."/>
            <person name="Aigle M."/>
            <person name="Anthouard V."/>
            <person name="Babour A."/>
            <person name="Barbe V."/>
            <person name="Barnay S."/>
            <person name="Blanchin S."/>
            <person name="Beckerich J.-M."/>
            <person name="Beyne E."/>
            <person name="Bleykasten C."/>
            <person name="Boisrame A."/>
            <person name="Boyer J."/>
            <person name="Cattolico L."/>
            <person name="Confanioleri F."/>
            <person name="de Daruvar A."/>
            <person name="Despons L."/>
            <person name="Fabre E."/>
            <person name="Fairhead C."/>
            <person name="Ferry-Dumazet H."/>
            <person name="Groppi A."/>
            <person name="Hantraye F."/>
            <person name="Hennequin C."/>
            <person name="Jauniaux N."/>
            <person name="Joyet P."/>
            <person name="Kachouri R."/>
            <person name="Kerrest A."/>
            <person name="Koszul R."/>
            <person name="Lemaire M."/>
            <person name="Lesur I."/>
            <person name="Ma L."/>
            <person name="Muller H."/>
            <person name="Nicaud J.-M."/>
            <person name="Nikolski M."/>
            <person name="Oztas S."/>
            <person name="Ozier-Kalogeropoulos O."/>
            <person name="Pellenz S."/>
            <person name="Potier S."/>
            <person name="Richard G.-F."/>
            <person name="Straub M.-L."/>
            <person name="Suleau A."/>
            <person name="Swennen D."/>
            <person name="Tekaia F."/>
            <person name="Wesolowski-Louvel M."/>
            <person name="Westhof E."/>
            <person name="Wirth B."/>
            <person name="Zeniou-Meyer M."/>
            <person name="Zivanovic Y."/>
            <person name="Bolotin-Fukuhara M."/>
            <person name="Thierry A."/>
            <person name="Bouchier C."/>
            <person name="Caudron B."/>
            <person name="Scarpelli C."/>
            <person name="Gaillardin C."/>
            <person name="Weissenbach J."/>
            <person name="Wincker P."/>
            <person name="Souciet J.-L."/>
        </authorList>
    </citation>
    <scope>NUCLEOTIDE SEQUENCE [LARGE SCALE GENOMIC DNA]</scope>
    <source>
        <strain>ATCC 36239 / CBS 767 / BCRC 21394 / JCM 1990 / NBRC 0083 / IGC 2968</strain>
    </source>
</reference>
<organism>
    <name type="scientific">Debaryomyces hansenii (strain ATCC 36239 / CBS 767 / BCRC 21394 / JCM 1990 / NBRC 0083 / IGC 2968)</name>
    <name type="common">Yeast</name>
    <name type="synonym">Torulaspora hansenii</name>
    <dbReference type="NCBI Taxonomy" id="284592"/>
    <lineage>
        <taxon>Eukaryota</taxon>
        <taxon>Fungi</taxon>
        <taxon>Dikarya</taxon>
        <taxon>Ascomycota</taxon>
        <taxon>Saccharomycotina</taxon>
        <taxon>Pichiomycetes</taxon>
        <taxon>Debaryomycetaceae</taxon>
        <taxon>Debaryomyces</taxon>
    </lineage>
</organism>
<name>CANB_DEBHA</name>
<comment type="function">
    <text evidence="1">Regulatory subunit of calcineurin, a calcium-dependent, calmodulin stimulated protein phosphatase. Confers calcium sensitivity (By similarity).</text>
</comment>
<comment type="subunit">
    <text evidence="1">Composed of a catalytic subunit (A) and a regulatory subunit (B).</text>
</comment>
<comment type="miscellaneous">
    <text evidence="1">This protein has four functional calcium-binding sites.</text>
</comment>
<comment type="similarity">
    <text evidence="3">Belongs to the calcineurin regulatory subunit family.</text>
</comment>
<gene>
    <name type="primary">CNB1</name>
    <name type="ordered locus">DEHA2B08866g</name>
</gene>
<accession>Q6BWS8</accession>
<proteinExistence type="inferred from homology"/>
<feature type="chain" id="PRO_0000073493" description="Calcineurin subunit B">
    <location>
        <begin position="1"/>
        <end position="174"/>
    </location>
</feature>
<feature type="domain" description="EF-hand 1" evidence="2">
    <location>
        <begin position="21"/>
        <end position="56"/>
    </location>
</feature>
<feature type="domain" description="EF-hand 2" evidence="2">
    <location>
        <begin position="60"/>
        <end position="88"/>
    </location>
</feature>
<feature type="domain" description="EF-hand 3" evidence="2">
    <location>
        <begin position="90"/>
        <end position="125"/>
    </location>
</feature>
<feature type="domain" description="EF-hand 4" evidence="2">
    <location>
        <begin position="131"/>
        <end position="166"/>
    </location>
</feature>
<feature type="binding site" evidence="2">
    <location>
        <position position="34"/>
    </location>
    <ligand>
        <name>Ca(2+)</name>
        <dbReference type="ChEBI" id="CHEBI:29108"/>
        <label>1</label>
    </ligand>
</feature>
<feature type="binding site" evidence="2">
    <location>
        <position position="36"/>
    </location>
    <ligand>
        <name>Ca(2+)</name>
        <dbReference type="ChEBI" id="CHEBI:29108"/>
        <label>1</label>
    </ligand>
</feature>
<feature type="binding site" evidence="2">
    <location>
        <position position="38"/>
    </location>
    <ligand>
        <name>Ca(2+)</name>
        <dbReference type="ChEBI" id="CHEBI:29108"/>
        <label>1</label>
    </ligand>
</feature>
<feature type="binding site" evidence="2">
    <location>
        <position position="40"/>
    </location>
    <ligand>
        <name>Ca(2+)</name>
        <dbReference type="ChEBI" id="CHEBI:29108"/>
        <label>1</label>
    </ligand>
</feature>
<feature type="binding site" evidence="2">
    <location>
        <position position="45"/>
    </location>
    <ligand>
        <name>Ca(2+)</name>
        <dbReference type="ChEBI" id="CHEBI:29108"/>
        <label>1</label>
    </ligand>
</feature>
<feature type="binding site" evidence="2">
    <location>
        <position position="66"/>
    </location>
    <ligand>
        <name>Ca(2+)</name>
        <dbReference type="ChEBI" id="CHEBI:29108"/>
        <label>2</label>
    </ligand>
</feature>
<feature type="binding site" evidence="2">
    <location>
        <position position="68"/>
    </location>
    <ligand>
        <name>Ca(2+)</name>
        <dbReference type="ChEBI" id="CHEBI:29108"/>
        <label>2</label>
    </ligand>
</feature>
<feature type="binding site" evidence="2">
    <location>
        <position position="70"/>
    </location>
    <ligand>
        <name>Ca(2+)</name>
        <dbReference type="ChEBI" id="CHEBI:29108"/>
        <label>2</label>
    </ligand>
</feature>
<feature type="binding site" evidence="2">
    <location>
        <position position="72"/>
    </location>
    <ligand>
        <name>Ca(2+)</name>
        <dbReference type="ChEBI" id="CHEBI:29108"/>
        <label>2</label>
    </ligand>
</feature>
<feature type="binding site" evidence="2">
    <location>
        <position position="77"/>
    </location>
    <ligand>
        <name>Ca(2+)</name>
        <dbReference type="ChEBI" id="CHEBI:29108"/>
        <label>2</label>
    </ligand>
</feature>
<feature type="binding site" evidence="2">
    <location>
        <position position="103"/>
    </location>
    <ligand>
        <name>Ca(2+)</name>
        <dbReference type="ChEBI" id="CHEBI:29108"/>
        <label>3</label>
    </ligand>
</feature>
<feature type="binding site" evidence="2">
    <location>
        <position position="105"/>
    </location>
    <ligand>
        <name>Ca(2+)</name>
        <dbReference type="ChEBI" id="CHEBI:29108"/>
        <label>3</label>
    </ligand>
</feature>
<feature type="binding site" evidence="2">
    <location>
        <position position="107"/>
    </location>
    <ligand>
        <name>Ca(2+)</name>
        <dbReference type="ChEBI" id="CHEBI:29108"/>
        <label>3</label>
    </ligand>
</feature>
<feature type="binding site" evidence="2">
    <location>
        <position position="109"/>
    </location>
    <ligand>
        <name>Ca(2+)</name>
        <dbReference type="ChEBI" id="CHEBI:29108"/>
        <label>3</label>
    </ligand>
</feature>
<feature type="binding site" evidence="2">
    <location>
        <position position="114"/>
    </location>
    <ligand>
        <name>Ca(2+)</name>
        <dbReference type="ChEBI" id="CHEBI:29108"/>
        <label>3</label>
    </ligand>
</feature>
<feature type="binding site" evidence="2">
    <location>
        <position position="144"/>
    </location>
    <ligand>
        <name>Ca(2+)</name>
        <dbReference type="ChEBI" id="CHEBI:29108"/>
        <label>4</label>
    </ligand>
</feature>
<feature type="binding site" evidence="2">
    <location>
        <position position="146"/>
    </location>
    <ligand>
        <name>Ca(2+)</name>
        <dbReference type="ChEBI" id="CHEBI:29108"/>
        <label>4</label>
    </ligand>
</feature>
<feature type="binding site" evidence="2">
    <location>
        <position position="148"/>
    </location>
    <ligand>
        <name>Ca(2+)</name>
        <dbReference type="ChEBI" id="CHEBI:29108"/>
        <label>4</label>
    </ligand>
</feature>
<feature type="binding site" evidence="2">
    <location>
        <position position="150"/>
    </location>
    <ligand>
        <name>Ca(2+)</name>
        <dbReference type="ChEBI" id="CHEBI:29108"/>
        <label>4</label>
    </ligand>
</feature>
<feature type="binding site" evidence="2">
    <location>
        <position position="155"/>
    </location>
    <ligand>
        <name>Ca(2+)</name>
        <dbReference type="ChEBI" id="CHEBI:29108"/>
        <label>4</label>
    </ligand>
</feature>
<evidence type="ECO:0000250" key="1"/>
<evidence type="ECO:0000255" key="2">
    <source>
        <dbReference type="PROSITE-ProRule" id="PRU00448"/>
    </source>
</evidence>
<evidence type="ECO:0000305" key="3"/>
<keyword id="KW-0106">Calcium</keyword>
<keyword id="KW-0479">Metal-binding</keyword>
<keyword id="KW-1185">Reference proteome</keyword>
<keyword id="KW-0677">Repeat</keyword>
<dbReference type="EMBL" id="CR382134">
    <property type="protein sequence ID" value="CAG85345.1"/>
    <property type="molecule type" value="Genomic_DNA"/>
</dbReference>
<dbReference type="RefSeq" id="XP_457341.1">
    <property type="nucleotide sequence ID" value="XM_457341.1"/>
</dbReference>
<dbReference type="SMR" id="Q6BWS8"/>
<dbReference type="FunCoup" id="Q6BWS8">
    <property type="interactions" value="882"/>
</dbReference>
<dbReference type="STRING" id="284592.Q6BWS8"/>
<dbReference type="GeneID" id="2913251"/>
<dbReference type="KEGG" id="dha:DEHA2B08866g"/>
<dbReference type="VEuPathDB" id="FungiDB:DEHA2B08866g"/>
<dbReference type="eggNOG" id="KOG0034">
    <property type="taxonomic scope" value="Eukaryota"/>
</dbReference>
<dbReference type="HOGENOM" id="CLU_061288_10_1_1"/>
<dbReference type="InParanoid" id="Q6BWS8"/>
<dbReference type="OMA" id="DTNFDRD"/>
<dbReference type="OrthoDB" id="191686at2759"/>
<dbReference type="Proteomes" id="UP000000599">
    <property type="component" value="Chromosome B"/>
</dbReference>
<dbReference type="GO" id="GO:0005955">
    <property type="term" value="C:calcineurin complex"/>
    <property type="evidence" value="ECO:0007669"/>
    <property type="project" value="EnsemblFungi"/>
</dbReference>
<dbReference type="GO" id="GO:0032153">
    <property type="term" value="C:cell division site"/>
    <property type="evidence" value="ECO:0007669"/>
    <property type="project" value="EnsemblFungi"/>
</dbReference>
<dbReference type="GO" id="GO:0005737">
    <property type="term" value="C:cytoplasm"/>
    <property type="evidence" value="ECO:0007669"/>
    <property type="project" value="EnsemblFungi"/>
</dbReference>
<dbReference type="GO" id="GO:0005509">
    <property type="term" value="F:calcium ion binding"/>
    <property type="evidence" value="ECO:0007669"/>
    <property type="project" value="InterPro"/>
</dbReference>
<dbReference type="GO" id="GO:0019211">
    <property type="term" value="F:phosphatase activator activity"/>
    <property type="evidence" value="ECO:0007669"/>
    <property type="project" value="EnsemblFungi"/>
</dbReference>
<dbReference type="GO" id="GO:0022604">
    <property type="term" value="P:regulation of cell morphogenesis"/>
    <property type="evidence" value="ECO:0007669"/>
    <property type="project" value="EnsemblFungi"/>
</dbReference>
<dbReference type="FunFam" id="1.10.238.10:FF:000001">
    <property type="entry name" value="Calmodulin 1"/>
    <property type="match status" value="1"/>
</dbReference>
<dbReference type="Gene3D" id="1.10.238.10">
    <property type="entry name" value="EF-hand"/>
    <property type="match status" value="1"/>
</dbReference>
<dbReference type="InterPro" id="IPR011992">
    <property type="entry name" value="EF-hand-dom_pair"/>
</dbReference>
<dbReference type="InterPro" id="IPR018247">
    <property type="entry name" value="EF_Hand_1_Ca_BS"/>
</dbReference>
<dbReference type="InterPro" id="IPR002048">
    <property type="entry name" value="EF_hand_dom"/>
</dbReference>
<dbReference type="PANTHER" id="PTHR45942">
    <property type="entry name" value="PROTEIN PHOSPATASE 3 REGULATORY SUBUNIT B ALPHA ISOFORM TYPE 1"/>
    <property type="match status" value="1"/>
</dbReference>
<dbReference type="Pfam" id="PF13499">
    <property type="entry name" value="EF-hand_7"/>
    <property type="match status" value="2"/>
</dbReference>
<dbReference type="PRINTS" id="PR00450">
    <property type="entry name" value="RECOVERIN"/>
</dbReference>
<dbReference type="SMART" id="SM00054">
    <property type="entry name" value="EFh"/>
    <property type="match status" value="4"/>
</dbReference>
<dbReference type="SUPFAM" id="SSF47473">
    <property type="entry name" value="EF-hand"/>
    <property type="match status" value="1"/>
</dbReference>
<dbReference type="PROSITE" id="PS00018">
    <property type="entry name" value="EF_HAND_1"/>
    <property type="match status" value="4"/>
</dbReference>
<dbReference type="PROSITE" id="PS50222">
    <property type="entry name" value="EF_HAND_2"/>
    <property type="match status" value="4"/>
</dbReference>